<evidence type="ECO:0000250" key="1"/>
<evidence type="ECO:0000255" key="2">
    <source>
        <dbReference type="PROSITE-ProRule" id="PRU00238"/>
    </source>
</evidence>
<evidence type="ECO:0007829" key="3">
    <source>
        <dbReference type="PDB" id="1A4F"/>
    </source>
</evidence>
<evidence type="ECO:0007829" key="4">
    <source>
        <dbReference type="PDB" id="1C40"/>
    </source>
</evidence>
<organism>
    <name type="scientific">Anser indicus</name>
    <name type="common">Bar-headed goose</name>
    <name type="synonym">Anas indica</name>
    <dbReference type="NCBI Taxonomy" id="8846"/>
    <lineage>
        <taxon>Eukaryota</taxon>
        <taxon>Metazoa</taxon>
        <taxon>Chordata</taxon>
        <taxon>Craniata</taxon>
        <taxon>Vertebrata</taxon>
        <taxon>Euteleostomi</taxon>
        <taxon>Archelosauria</taxon>
        <taxon>Archosauria</taxon>
        <taxon>Dinosauria</taxon>
        <taxon>Saurischia</taxon>
        <taxon>Theropoda</taxon>
        <taxon>Coelurosauria</taxon>
        <taxon>Aves</taxon>
        <taxon>Neognathae</taxon>
        <taxon>Galloanserae</taxon>
        <taxon>Anseriformes</taxon>
        <taxon>Anatidae</taxon>
        <taxon>Anserinae</taxon>
        <taxon>Anser</taxon>
    </lineage>
</organism>
<reference key="1">
    <citation type="journal article" date="1982" name="Hoppe-Seyler's Z. Physiol. Chem.">
        <title>Hemoglobins, XLVII. Hemoglobins of the bar-headed goose (Anser indicus): primary structure and physiology of respiration, systematic and evolution.</title>
        <authorList>
            <person name="Oberthur W."/>
            <person name="Braunitzer G."/>
            <person name="Wurdinger I."/>
        </authorList>
    </citation>
    <scope>PROTEIN SEQUENCE OF 2-142</scope>
</reference>
<reference key="2">
    <citation type="journal article" date="1996" name="J. Mol. Biol.">
        <title>The crystal structure of a high oxygen affinity species of haemoglobin (bar-headed goose haemoglobin in the oxy form).</title>
        <authorList>
            <person name="Zhang J."/>
            <person name="Hua Z."/>
            <person name="Tame J.R.H."/>
            <person name="Lu G."/>
            <person name="Zhang R."/>
            <person name="Gu X."/>
        </authorList>
    </citation>
    <scope>X-RAY CRYSTALLOGRAPHY (2.0 ANGSTROMS)</scope>
</reference>
<protein>
    <recommendedName>
        <fullName>Hemoglobin subunit alpha-A</fullName>
    </recommendedName>
    <alternativeName>
        <fullName>Alpha-A-globin</fullName>
    </alternativeName>
    <alternativeName>
        <fullName>Hemoglobin alpha-A chain</fullName>
    </alternativeName>
</protein>
<name>HBA_ANSIN</name>
<proteinExistence type="evidence at protein level"/>
<gene>
    <name type="primary">HBAA</name>
</gene>
<sequence length="142" mass="15468">MVLSAADKTNVKGVFSKISGHAEEYGAETLERMFTAYPQTKTYFPHFDLQHGSAQIKAHGKKVVAALVEAVNHIDDIAGALSKLSDLHAQKLRVDPVNFKFLGHCFLVVVAIHHPSALTAEVHASLDKFLCAVGTVLTAKYR</sequence>
<feature type="initiator methionine" description="Removed" evidence="1">
    <location>
        <position position="1"/>
    </location>
</feature>
<feature type="chain" id="PRO_0000052552" description="Hemoglobin subunit alpha-A">
    <location>
        <begin position="2"/>
        <end position="142"/>
    </location>
</feature>
<feature type="domain" description="Globin" evidence="2">
    <location>
        <begin position="2"/>
        <end position="142"/>
    </location>
</feature>
<feature type="binding site" evidence="2">
    <location>
        <position position="59"/>
    </location>
    <ligand>
        <name>O2</name>
        <dbReference type="ChEBI" id="CHEBI:15379"/>
    </ligand>
</feature>
<feature type="binding site" description="proximal binding residue" evidence="2">
    <location>
        <position position="88"/>
    </location>
    <ligand>
        <name>heme b</name>
        <dbReference type="ChEBI" id="CHEBI:60344"/>
    </ligand>
    <ligandPart>
        <name>Fe</name>
        <dbReference type="ChEBI" id="CHEBI:18248"/>
    </ligandPart>
</feature>
<feature type="helix" evidence="3">
    <location>
        <begin position="5"/>
        <end position="18"/>
    </location>
</feature>
<feature type="helix" evidence="3">
    <location>
        <begin position="22"/>
        <end position="36"/>
    </location>
</feature>
<feature type="helix" evidence="3">
    <location>
        <begin position="38"/>
        <end position="43"/>
    </location>
</feature>
<feature type="helix" evidence="3">
    <location>
        <begin position="54"/>
        <end position="71"/>
    </location>
</feature>
<feature type="turn" evidence="3">
    <location>
        <begin position="72"/>
        <end position="75"/>
    </location>
</feature>
<feature type="helix" evidence="3">
    <location>
        <begin position="77"/>
        <end position="80"/>
    </location>
</feature>
<feature type="helix" evidence="3">
    <location>
        <begin position="82"/>
        <end position="89"/>
    </location>
</feature>
<feature type="helix" evidence="3">
    <location>
        <begin position="97"/>
        <end position="113"/>
    </location>
</feature>
<feature type="turn" evidence="3">
    <location>
        <begin position="115"/>
        <end position="117"/>
    </location>
</feature>
<feature type="helix" evidence="3">
    <location>
        <begin position="120"/>
        <end position="136"/>
    </location>
</feature>
<feature type="helix" evidence="4">
    <location>
        <begin position="139"/>
        <end position="141"/>
    </location>
</feature>
<keyword id="KW-0002">3D-structure</keyword>
<keyword id="KW-0903">Direct protein sequencing</keyword>
<keyword id="KW-0349">Heme</keyword>
<keyword id="KW-0408">Iron</keyword>
<keyword id="KW-0479">Metal-binding</keyword>
<keyword id="KW-0561">Oxygen transport</keyword>
<keyword id="KW-0813">Transport</keyword>
<comment type="function">
    <text>Involved in oxygen transport from the lung to the various peripheral tissues.</text>
</comment>
<comment type="subunit">
    <text>Heterotetramer of two alpha chains and two beta chains.</text>
</comment>
<comment type="tissue specificity">
    <text>Red blood cells.</text>
</comment>
<comment type="similarity">
    <text evidence="2">Belongs to the globin family.</text>
</comment>
<accession>P01990</accession>
<dbReference type="PIR" id="A02311">
    <property type="entry name" value="HAGSI"/>
</dbReference>
<dbReference type="PDB" id="1A4F">
    <property type="method" value="X-ray"/>
    <property type="resolution" value="2.00 A"/>
    <property type="chains" value="A=2-142"/>
</dbReference>
<dbReference type="PDB" id="1C40">
    <property type="method" value="X-ray"/>
    <property type="resolution" value="2.30 A"/>
    <property type="chains" value="A=2-142"/>
</dbReference>
<dbReference type="PDB" id="1HV4">
    <property type="method" value="X-ray"/>
    <property type="resolution" value="2.80 A"/>
    <property type="chains" value="A/C/E/G=2-142"/>
</dbReference>
<dbReference type="PDBsum" id="1A4F"/>
<dbReference type="PDBsum" id="1C40"/>
<dbReference type="PDBsum" id="1HV4"/>
<dbReference type="SMR" id="P01990"/>
<dbReference type="MINT" id="P01990"/>
<dbReference type="EvolutionaryTrace" id="P01990"/>
<dbReference type="GO" id="GO:0072562">
    <property type="term" value="C:blood microparticle"/>
    <property type="evidence" value="ECO:0007669"/>
    <property type="project" value="TreeGrafter"/>
</dbReference>
<dbReference type="GO" id="GO:0031838">
    <property type="term" value="C:haptoglobin-hemoglobin complex"/>
    <property type="evidence" value="ECO:0007669"/>
    <property type="project" value="TreeGrafter"/>
</dbReference>
<dbReference type="GO" id="GO:0005833">
    <property type="term" value="C:hemoglobin complex"/>
    <property type="evidence" value="ECO:0007669"/>
    <property type="project" value="InterPro"/>
</dbReference>
<dbReference type="GO" id="GO:0031720">
    <property type="term" value="F:haptoglobin binding"/>
    <property type="evidence" value="ECO:0007669"/>
    <property type="project" value="TreeGrafter"/>
</dbReference>
<dbReference type="GO" id="GO:0020037">
    <property type="term" value="F:heme binding"/>
    <property type="evidence" value="ECO:0007669"/>
    <property type="project" value="InterPro"/>
</dbReference>
<dbReference type="GO" id="GO:0005506">
    <property type="term" value="F:iron ion binding"/>
    <property type="evidence" value="ECO:0007669"/>
    <property type="project" value="InterPro"/>
</dbReference>
<dbReference type="GO" id="GO:0043177">
    <property type="term" value="F:organic acid binding"/>
    <property type="evidence" value="ECO:0007669"/>
    <property type="project" value="TreeGrafter"/>
</dbReference>
<dbReference type="GO" id="GO:0019825">
    <property type="term" value="F:oxygen binding"/>
    <property type="evidence" value="ECO:0007669"/>
    <property type="project" value="InterPro"/>
</dbReference>
<dbReference type="GO" id="GO:0005344">
    <property type="term" value="F:oxygen carrier activity"/>
    <property type="evidence" value="ECO:0007669"/>
    <property type="project" value="UniProtKB-KW"/>
</dbReference>
<dbReference type="GO" id="GO:0004601">
    <property type="term" value="F:peroxidase activity"/>
    <property type="evidence" value="ECO:0007669"/>
    <property type="project" value="TreeGrafter"/>
</dbReference>
<dbReference type="GO" id="GO:0042744">
    <property type="term" value="P:hydrogen peroxide catabolic process"/>
    <property type="evidence" value="ECO:0007669"/>
    <property type="project" value="TreeGrafter"/>
</dbReference>
<dbReference type="CDD" id="cd08927">
    <property type="entry name" value="Hb-alpha-like"/>
    <property type="match status" value="1"/>
</dbReference>
<dbReference type="FunFam" id="1.10.490.10:FF:000002">
    <property type="entry name" value="Hemoglobin subunit alpha"/>
    <property type="match status" value="1"/>
</dbReference>
<dbReference type="Gene3D" id="1.10.490.10">
    <property type="entry name" value="Globins"/>
    <property type="match status" value="1"/>
</dbReference>
<dbReference type="InterPro" id="IPR000971">
    <property type="entry name" value="Globin"/>
</dbReference>
<dbReference type="InterPro" id="IPR009050">
    <property type="entry name" value="Globin-like_sf"/>
</dbReference>
<dbReference type="InterPro" id="IPR012292">
    <property type="entry name" value="Globin/Proto"/>
</dbReference>
<dbReference type="InterPro" id="IPR002338">
    <property type="entry name" value="Hemoglobin_a-typ"/>
</dbReference>
<dbReference type="InterPro" id="IPR050056">
    <property type="entry name" value="Hemoglobin_oxygen_transport"/>
</dbReference>
<dbReference type="InterPro" id="IPR002339">
    <property type="entry name" value="Hemoglobin_pi"/>
</dbReference>
<dbReference type="PANTHER" id="PTHR11442">
    <property type="entry name" value="HEMOGLOBIN FAMILY MEMBER"/>
    <property type="match status" value="1"/>
</dbReference>
<dbReference type="PANTHER" id="PTHR11442:SF48">
    <property type="entry name" value="HEMOGLOBIN SUBUNIT ALPHA"/>
    <property type="match status" value="1"/>
</dbReference>
<dbReference type="Pfam" id="PF00042">
    <property type="entry name" value="Globin"/>
    <property type="match status" value="1"/>
</dbReference>
<dbReference type="PRINTS" id="PR00612">
    <property type="entry name" value="ALPHAHAEM"/>
</dbReference>
<dbReference type="PRINTS" id="PR00815">
    <property type="entry name" value="PIHAEM"/>
</dbReference>
<dbReference type="SUPFAM" id="SSF46458">
    <property type="entry name" value="Globin-like"/>
    <property type="match status" value="1"/>
</dbReference>
<dbReference type="PROSITE" id="PS01033">
    <property type="entry name" value="GLOBIN"/>
    <property type="match status" value="1"/>
</dbReference>